<proteinExistence type="evidence at transcript level"/>
<accession>Q70VZ7</accession>
<organism>
    <name type="scientific">Bos taurus</name>
    <name type="common">Bovine</name>
    <dbReference type="NCBI Taxonomy" id="9913"/>
    <lineage>
        <taxon>Eukaryota</taxon>
        <taxon>Metazoa</taxon>
        <taxon>Chordata</taxon>
        <taxon>Craniata</taxon>
        <taxon>Vertebrata</taxon>
        <taxon>Euteleostomi</taxon>
        <taxon>Mammalia</taxon>
        <taxon>Eutheria</taxon>
        <taxon>Laurasiatheria</taxon>
        <taxon>Artiodactyla</taxon>
        <taxon>Ruminantia</taxon>
        <taxon>Pecora</taxon>
        <taxon>Bovidae</taxon>
        <taxon>Bovinae</taxon>
        <taxon>Bos</taxon>
    </lineage>
</organism>
<keyword id="KW-0012">Acyltransferase</keyword>
<keyword id="KW-0256">Endoplasmic reticulum</keyword>
<keyword id="KW-0319">Glycerol metabolism</keyword>
<keyword id="KW-0325">Glycoprotein</keyword>
<keyword id="KW-0444">Lipid biosynthesis</keyword>
<keyword id="KW-0443">Lipid metabolism</keyword>
<keyword id="KW-0472">Membrane</keyword>
<keyword id="KW-1185">Reference proteome</keyword>
<keyword id="KW-0808">Transferase</keyword>
<keyword id="KW-0812">Transmembrane</keyword>
<keyword id="KW-1133">Transmembrane helix</keyword>
<sequence length="335" mass="39110">MKVEFAPLNIPLARRLQTAAVLHWLLSFLLFAQVCLGIIVFLIIYNYWFLYLPYLTWLYFDWQTPEQGGRRSEWVRNWAIWRYFKDYFPIHLIKTWDLDPSHNYIFGFHPHGVLVVGAFGNFCTNYSAFKELFPGFTSYLHVLPYWFRCPLFREYLMSSGPVSVSKKSVCHVLSKEGGGNISVIVLGGAEESLDAHPGKFTLFIRQRKGFVKIALTHGAYLVPVFSFGENELFKQVSNPEGSWLRNVQEKLQKIMGFALPLFHARGIFQYNFGLIPYRKPIHTVVGRPIPVRQTLNPTSEQIEELHQTYMEELRKLFEEHKGKYGIPENETLIFR</sequence>
<evidence type="ECO:0000250" key="1">
    <source>
        <dbReference type="UniProtKB" id="Q91ZV4"/>
    </source>
</evidence>
<evidence type="ECO:0000255" key="2"/>
<evidence type="ECO:0000305" key="3"/>
<comment type="function">
    <text evidence="1">Involved in glycerolipid synthesis and lipid metabolism. Catalyzes the formation of diacylglycerol, the precursor of triacylglycerol, by transferring the acyl chain of a fatty acyl-CoA to a monoacylglycerol, mainly at the sn-1 or sn-3 positions. It uses both sn-2-monoacylglycerol (2-acylglycerol) and sn-1-monoacylglycerol (1-acyl-sn-glycerol) equally well as substrates, and uses sn-3-monoacylglycerol (3-acyl-sn-glycerol) with lower efficiency. Probably not involved in absorption of dietary fat in the small intestine.</text>
</comment>
<comment type="catalytic activity">
    <reaction evidence="1">
        <text>a 2-acylglycerol + an acyl-CoA = a 1,2-diacylglycerol + CoA</text>
        <dbReference type="Rhea" id="RHEA:16741"/>
        <dbReference type="ChEBI" id="CHEBI:17389"/>
        <dbReference type="ChEBI" id="CHEBI:49172"/>
        <dbReference type="ChEBI" id="CHEBI:57287"/>
        <dbReference type="ChEBI" id="CHEBI:58342"/>
        <dbReference type="EC" id="2.3.1.22"/>
    </reaction>
    <physiologicalReaction direction="left-to-right" evidence="1">
        <dbReference type="Rhea" id="RHEA:16742"/>
    </physiologicalReaction>
</comment>
<comment type="catalytic activity">
    <reaction evidence="1">
        <text>2-(9Z-octadecenoyl)-glycerol + butanoyl-CoA = 1-butanoyl-2-(9Z-octadecenoyl)-glycerol + CoA</text>
        <dbReference type="Rhea" id="RHEA:77271"/>
        <dbReference type="ChEBI" id="CHEBI:57287"/>
        <dbReference type="ChEBI" id="CHEBI:57371"/>
        <dbReference type="ChEBI" id="CHEBI:73990"/>
        <dbReference type="ChEBI" id="CHEBI:197386"/>
    </reaction>
    <physiologicalReaction direction="left-to-right" evidence="1">
        <dbReference type="Rhea" id="RHEA:77272"/>
    </physiologicalReaction>
</comment>
<comment type="catalytic activity">
    <reaction evidence="1">
        <text>2-(9Z-octadecenoyl)-glycerol + octanoyl-CoA = 1-octanoyl-2-(9Z-octadecenoyl)-glycerol + CoA</text>
        <dbReference type="Rhea" id="RHEA:77539"/>
        <dbReference type="ChEBI" id="CHEBI:57287"/>
        <dbReference type="ChEBI" id="CHEBI:57386"/>
        <dbReference type="ChEBI" id="CHEBI:73990"/>
        <dbReference type="ChEBI" id="CHEBI:197391"/>
    </reaction>
    <physiologicalReaction direction="left-to-right" evidence="1">
        <dbReference type="Rhea" id="RHEA:77540"/>
    </physiologicalReaction>
</comment>
<comment type="catalytic activity">
    <reaction evidence="1">
        <text>2-(9Z-octadecenoyl)-glycerol + dodecanoyl-CoA = 1-dodecanoyl-2-(9Z-octadecenoyl)-glycerol + CoA</text>
        <dbReference type="Rhea" id="RHEA:77275"/>
        <dbReference type="ChEBI" id="CHEBI:57287"/>
        <dbReference type="ChEBI" id="CHEBI:57375"/>
        <dbReference type="ChEBI" id="CHEBI:73990"/>
        <dbReference type="ChEBI" id="CHEBI:75579"/>
    </reaction>
    <physiologicalReaction direction="left-to-right" evidence="1">
        <dbReference type="Rhea" id="RHEA:77276"/>
    </physiologicalReaction>
</comment>
<comment type="catalytic activity">
    <reaction evidence="1">
        <text>2-(9Z-octadecenoyl)-glycerol + tetradecanoyl-CoA = 1-tetradecanoyl-2-(9Z-octadecenoyl)-glycerol + CoA</text>
        <dbReference type="Rhea" id="RHEA:77279"/>
        <dbReference type="ChEBI" id="CHEBI:57287"/>
        <dbReference type="ChEBI" id="CHEBI:57385"/>
        <dbReference type="ChEBI" id="CHEBI:73990"/>
        <dbReference type="ChEBI" id="CHEBI:75582"/>
    </reaction>
    <physiologicalReaction direction="left-to-right" evidence="1">
        <dbReference type="Rhea" id="RHEA:77280"/>
    </physiologicalReaction>
</comment>
<comment type="catalytic activity">
    <reaction evidence="1">
        <text>2-(9Z-octadecenoyl)-glycerol + hexadecanoyl-CoA = 1-hexadecanoyl-2-(9Z-octadecenoyl)-glycerol + CoA</text>
        <dbReference type="Rhea" id="RHEA:77283"/>
        <dbReference type="ChEBI" id="CHEBI:57287"/>
        <dbReference type="ChEBI" id="CHEBI:57379"/>
        <dbReference type="ChEBI" id="CHEBI:73990"/>
        <dbReference type="ChEBI" id="CHEBI:75585"/>
    </reaction>
    <physiologicalReaction direction="left-to-right" evidence="1">
        <dbReference type="Rhea" id="RHEA:77284"/>
    </physiologicalReaction>
</comment>
<comment type="catalytic activity">
    <reaction evidence="1">
        <text>2-(9Z-octadecenoyl)-glycerol + octadecanoyl-CoA = 1-octadecanoyl-2-(9Z-octadecenoyl)-glycerol + CoA</text>
        <dbReference type="Rhea" id="RHEA:77287"/>
        <dbReference type="ChEBI" id="CHEBI:57287"/>
        <dbReference type="ChEBI" id="CHEBI:57394"/>
        <dbReference type="ChEBI" id="CHEBI:73990"/>
        <dbReference type="ChEBI" id="CHEBI:75590"/>
    </reaction>
    <physiologicalReaction direction="left-to-right" evidence="1">
        <dbReference type="Rhea" id="RHEA:77288"/>
    </physiologicalReaction>
</comment>
<comment type="catalytic activity">
    <reaction evidence="1">
        <text>eicosanoyl-CoA + 2-(9Z-octadecenoyl)-glycerol = 1-eicosanoyl-2-(9Z-octadecenoyl)-glycerol + CoA</text>
        <dbReference type="Rhea" id="RHEA:77543"/>
        <dbReference type="ChEBI" id="CHEBI:57287"/>
        <dbReference type="ChEBI" id="CHEBI:57380"/>
        <dbReference type="ChEBI" id="CHEBI:73990"/>
        <dbReference type="ChEBI" id="CHEBI:197392"/>
    </reaction>
    <physiologicalReaction direction="left-to-right" evidence="1">
        <dbReference type="Rhea" id="RHEA:77544"/>
    </physiologicalReaction>
</comment>
<comment type="catalytic activity">
    <reaction evidence="1">
        <text>2-(9Z-octadecenoyl)-glycerol + (9Z)-octadecenoyl-CoA = 1,2-di-(9Z-octadecenoyl)-glycerol + CoA</text>
        <dbReference type="Rhea" id="RHEA:39951"/>
        <dbReference type="ChEBI" id="CHEBI:52323"/>
        <dbReference type="ChEBI" id="CHEBI:57287"/>
        <dbReference type="ChEBI" id="CHEBI:57387"/>
        <dbReference type="ChEBI" id="CHEBI:73990"/>
    </reaction>
    <physiologicalReaction direction="left-to-right" evidence="1">
        <dbReference type="Rhea" id="RHEA:39952"/>
    </physiologicalReaction>
</comment>
<comment type="catalytic activity">
    <reaction evidence="1">
        <text>2-(9Z-octadecenoyl)-glycerol + (9Z,12Z)-octadecadienoyl-CoA = 1-(9Z,12Z-octadecadienoyl)-2-(9Z-octadecenoyl)-glycerol + CoA</text>
        <dbReference type="Rhea" id="RHEA:77291"/>
        <dbReference type="ChEBI" id="CHEBI:57287"/>
        <dbReference type="ChEBI" id="CHEBI:57383"/>
        <dbReference type="ChEBI" id="CHEBI:73990"/>
        <dbReference type="ChEBI" id="CHEBI:75614"/>
    </reaction>
    <physiologicalReaction direction="left-to-right" evidence="1">
        <dbReference type="Rhea" id="RHEA:77292"/>
    </physiologicalReaction>
</comment>
<comment type="catalytic activity">
    <reaction evidence="1">
        <text>2-(9Z-octadecenoyl)-glycerol + (5Z,8Z,11Z,14Z)-eicosatetraenoyl-CoA = 1-(5Z,8Z,11Z,14Z-eicosatetraenoyl)-2-(9Z-octadecenoyl)-glycerol + CoA</text>
        <dbReference type="Rhea" id="RHEA:77547"/>
        <dbReference type="ChEBI" id="CHEBI:57287"/>
        <dbReference type="ChEBI" id="CHEBI:57368"/>
        <dbReference type="ChEBI" id="CHEBI:73990"/>
        <dbReference type="ChEBI" id="CHEBI:75611"/>
    </reaction>
    <physiologicalReaction direction="left-to-right" evidence="1">
        <dbReference type="Rhea" id="RHEA:77548"/>
    </physiologicalReaction>
</comment>
<comment type="catalytic activity">
    <reaction evidence="1">
        <text>a 2-acylglycerol + an acyl-CoA = a 1,2-diacyl-sn-glycerol + CoA</text>
        <dbReference type="Rhea" id="RHEA:32947"/>
        <dbReference type="ChEBI" id="CHEBI:17389"/>
        <dbReference type="ChEBI" id="CHEBI:17815"/>
        <dbReference type="ChEBI" id="CHEBI:57287"/>
        <dbReference type="ChEBI" id="CHEBI:58342"/>
    </reaction>
    <physiologicalReaction direction="left-to-right" evidence="1">
        <dbReference type="Rhea" id="RHEA:32948"/>
    </physiologicalReaction>
</comment>
<comment type="catalytic activity">
    <reaction evidence="1">
        <text>a 2-acylglycerol + an acyl-CoA = a 2,3-diacyl-sn-glycerol + CoA</text>
        <dbReference type="Rhea" id="RHEA:38467"/>
        <dbReference type="ChEBI" id="CHEBI:17389"/>
        <dbReference type="ChEBI" id="CHEBI:57287"/>
        <dbReference type="ChEBI" id="CHEBI:58342"/>
        <dbReference type="ChEBI" id="CHEBI:75524"/>
    </reaction>
    <physiologicalReaction direction="left-to-right" evidence="1">
        <dbReference type="Rhea" id="RHEA:38468"/>
    </physiologicalReaction>
</comment>
<comment type="catalytic activity">
    <reaction evidence="1">
        <text>a 1-acylglycerol + an acyl-CoA = a 1,2-diacylglycerol + CoA</text>
        <dbReference type="Rhea" id="RHEA:39943"/>
        <dbReference type="ChEBI" id="CHEBI:35759"/>
        <dbReference type="ChEBI" id="CHEBI:49172"/>
        <dbReference type="ChEBI" id="CHEBI:57287"/>
        <dbReference type="ChEBI" id="CHEBI:58342"/>
    </reaction>
    <physiologicalReaction direction="left-to-right" evidence="1">
        <dbReference type="Rhea" id="RHEA:39944"/>
    </physiologicalReaction>
</comment>
<comment type="catalytic activity">
    <reaction evidence="1">
        <text>1-dodecanoylglycerol + (9Z)-octadecenoyl-CoA = 1-dodecanoyl-2-(9Z-octadecenoyl)-glycerol + CoA</text>
        <dbReference type="Rhea" id="RHEA:38115"/>
        <dbReference type="ChEBI" id="CHEBI:57287"/>
        <dbReference type="ChEBI" id="CHEBI:57387"/>
        <dbReference type="ChEBI" id="CHEBI:75539"/>
        <dbReference type="ChEBI" id="CHEBI:75579"/>
    </reaction>
    <physiologicalReaction direction="left-to-right" evidence="1">
        <dbReference type="Rhea" id="RHEA:38116"/>
    </physiologicalReaction>
</comment>
<comment type="catalytic activity">
    <reaction evidence="1">
        <text>1-tetradecanoylglycerol + (9Z)-octadecenoyl-CoA = 1-tetradecanoyl-2-(9Z-octadecenoyl)-glycerol + CoA</text>
        <dbReference type="Rhea" id="RHEA:38119"/>
        <dbReference type="ChEBI" id="CHEBI:57287"/>
        <dbReference type="ChEBI" id="CHEBI:57387"/>
        <dbReference type="ChEBI" id="CHEBI:75562"/>
        <dbReference type="ChEBI" id="CHEBI:75582"/>
    </reaction>
    <physiologicalReaction direction="left-to-right" evidence="1">
        <dbReference type="Rhea" id="RHEA:38120"/>
    </physiologicalReaction>
</comment>
<comment type="catalytic activity">
    <reaction evidence="1">
        <text>1-hexadecanoylglycerol + (9Z)-octadecenoyl-CoA = 1-hexadecanoyl-2-(9Z-octadecenoyl)-glycerol + CoA</text>
        <dbReference type="Rhea" id="RHEA:38123"/>
        <dbReference type="ChEBI" id="CHEBI:57287"/>
        <dbReference type="ChEBI" id="CHEBI:57387"/>
        <dbReference type="ChEBI" id="CHEBI:69081"/>
        <dbReference type="ChEBI" id="CHEBI:75585"/>
    </reaction>
    <physiologicalReaction direction="left-to-right" evidence="1">
        <dbReference type="Rhea" id="RHEA:38124"/>
    </physiologicalReaction>
</comment>
<comment type="catalytic activity">
    <reaction evidence="1">
        <text>1-(9Z-octadecenoyl)-glycerol + (9Z)-octadecenoyl-CoA = 1,2-di-(9Z-octadecenoyl)-glycerol + CoA</text>
        <dbReference type="Rhea" id="RHEA:37915"/>
        <dbReference type="ChEBI" id="CHEBI:52323"/>
        <dbReference type="ChEBI" id="CHEBI:57287"/>
        <dbReference type="ChEBI" id="CHEBI:57387"/>
        <dbReference type="ChEBI" id="CHEBI:75342"/>
    </reaction>
    <physiologicalReaction direction="left-to-right" evidence="1">
        <dbReference type="Rhea" id="RHEA:37916"/>
    </physiologicalReaction>
</comment>
<comment type="catalytic activity">
    <reaction evidence="1">
        <text>1-(9Z,12Z-octadecadienoyl)-glycerol + (9Z)-octadecenoyl-CoA = 1-(9Z,12Z-octadecadienoyl)-2-(9Z-octadecenoyl)-glycerol + CoA</text>
        <dbReference type="Rhea" id="RHEA:38131"/>
        <dbReference type="ChEBI" id="CHEBI:57287"/>
        <dbReference type="ChEBI" id="CHEBI:57387"/>
        <dbReference type="ChEBI" id="CHEBI:75568"/>
        <dbReference type="ChEBI" id="CHEBI:75614"/>
    </reaction>
    <physiologicalReaction direction="left-to-right" evidence="1">
        <dbReference type="Rhea" id="RHEA:38132"/>
    </physiologicalReaction>
</comment>
<comment type="catalytic activity">
    <reaction evidence="1">
        <text>1-(9Z,12Z,15Z-octadecatrienoyl)-glycerol + (9Z)-octadecenoyl-CoA = 1-(9Z,12Z,15Z-octadecatrienoyl)-2-(9Z-octadecenoyl)-glycerol + CoA</text>
        <dbReference type="Rhea" id="RHEA:38135"/>
        <dbReference type="ChEBI" id="CHEBI:57287"/>
        <dbReference type="ChEBI" id="CHEBI:57387"/>
        <dbReference type="ChEBI" id="CHEBI:75609"/>
        <dbReference type="ChEBI" id="CHEBI:75610"/>
    </reaction>
    <physiologicalReaction direction="left-to-right" evidence="1">
        <dbReference type="Rhea" id="RHEA:38136"/>
    </physiologicalReaction>
</comment>
<comment type="catalytic activity">
    <reaction evidence="1">
        <text>1-(5Z,8Z,11Z,14Z-eicosatetraenoyl)-glycerol + (9Z)-octadecenoyl-CoA = 1-(5Z,8Z,11Z,14Z-eicosatetraenoyl)-2-(9Z-octadecenoyl)-glycerol + CoA</text>
        <dbReference type="Rhea" id="RHEA:38139"/>
        <dbReference type="ChEBI" id="CHEBI:57287"/>
        <dbReference type="ChEBI" id="CHEBI:57387"/>
        <dbReference type="ChEBI" id="CHEBI:75611"/>
        <dbReference type="ChEBI" id="CHEBI:75612"/>
    </reaction>
    <physiologicalReaction direction="left-to-right" evidence="1">
        <dbReference type="Rhea" id="RHEA:38140"/>
    </physiologicalReaction>
</comment>
<comment type="catalytic activity">
    <reaction evidence="1">
        <text>a 1-acylglycerol + an acyl-CoA = a 1,3-diacylglycerol + CoA</text>
        <dbReference type="Rhea" id="RHEA:77571"/>
        <dbReference type="ChEBI" id="CHEBI:35759"/>
        <dbReference type="ChEBI" id="CHEBI:47777"/>
        <dbReference type="ChEBI" id="CHEBI:57287"/>
        <dbReference type="ChEBI" id="CHEBI:58342"/>
    </reaction>
    <physiologicalReaction direction="left-to-right" evidence="1">
        <dbReference type="Rhea" id="RHEA:77572"/>
    </physiologicalReaction>
</comment>
<comment type="catalytic activity">
    <reaction evidence="1">
        <text>1-dodecanoylglycerol + (9Z)-octadecenoyl-CoA = 1-dodecanoyl-3-(9Z-octadecenoyl)-glycerol + CoA</text>
        <dbReference type="Rhea" id="RHEA:77587"/>
        <dbReference type="ChEBI" id="CHEBI:57287"/>
        <dbReference type="ChEBI" id="CHEBI:57387"/>
        <dbReference type="ChEBI" id="CHEBI:75539"/>
        <dbReference type="ChEBI" id="CHEBI:197406"/>
    </reaction>
    <physiologicalReaction direction="left-to-right" evidence="1">
        <dbReference type="Rhea" id="RHEA:77588"/>
    </physiologicalReaction>
</comment>
<comment type="catalytic activity">
    <reaction evidence="1">
        <text>1-hexadecanoylglycerol + (9Z)-octadecenoyl-CoA = 1-(9Z-octadecenoyl)-3-hexadecanoylglycerol + CoA</text>
        <dbReference type="Rhea" id="RHEA:77563"/>
        <dbReference type="ChEBI" id="CHEBI:57287"/>
        <dbReference type="ChEBI" id="CHEBI:57387"/>
        <dbReference type="ChEBI" id="CHEBI:69081"/>
        <dbReference type="ChEBI" id="CHEBI:75869"/>
    </reaction>
    <physiologicalReaction direction="left-to-right" evidence="1">
        <dbReference type="Rhea" id="RHEA:77564"/>
    </physiologicalReaction>
</comment>
<comment type="catalytic activity">
    <reaction evidence="1">
        <text>1-octadecanoylglycerol + (9Z)-octadecenoyl-CoA = 1-octadecanoyl-3-(9Z-octadecenoyl)-glycerol + CoA</text>
        <dbReference type="Rhea" id="RHEA:77583"/>
        <dbReference type="ChEBI" id="CHEBI:57287"/>
        <dbReference type="ChEBI" id="CHEBI:57387"/>
        <dbReference type="ChEBI" id="CHEBI:75555"/>
        <dbReference type="ChEBI" id="CHEBI:197407"/>
    </reaction>
    <physiologicalReaction direction="left-to-right" evidence="1">
        <dbReference type="Rhea" id="RHEA:77584"/>
    </physiologicalReaction>
</comment>
<comment type="catalytic activity">
    <reaction evidence="1">
        <text>1-(9Z-octadecenoyl)-sn-glycerol + (9Z)-octadecenoyl-CoA = 1,3-di-(9Z-octadecenoyl)-glycerol + CoA</text>
        <dbReference type="Rhea" id="RHEA:77267"/>
        <dbReference type="ChEBI" id="CHEBI:57287"/>
        <dbReference type="ChEBI" id="CHEBI:57387"/>
        <dbReference type="ChEBI" id="CHEBI:75735"/>
        <dbReference type="ChEBI" id="CHEBI:75757"/>
    </reaction>
    <physiologicalReaction direction="left-to-right" evidence="1">
        <dbReference type="Rhea" id="RHEA:77268"/>
    </physiologicalReaction>
</comment>
<comment type="catalytic activity">
    <reaction evidence="1">
        <text>1-(9Z,12Z-octadecadienoyl)-glycerol + (9Z)-octadecenoyl-CoA = 1-(9Z-octadecenoyl)-3-(9Z,12Z-octadecadienoyl)-glycerol + CoA</text>
        <dbReference type="Rhea" id="RHEA:77591"/>
        <dbReference type="ChEBI" id="CHEBI:57287"/>
        <dbReference type="ChEBI" id="CHEBI:57387"/>
        <dbReference type="ChEBI" id="CHEBI:75568"/>
        <dbReference type="ChEBI" id="CHEBI:133484"/>
    </reaction>
    <physiologicalReaction direction="left-to-right" evidence="1">
        <dbReference type="Rhea" id="RHEA:77592"/>
    </physiologicalReaction>
</comment>
<comment type="catalytic activity">
    <reaction evidence="1">
        <text>1-(9Z,12Z,15Z-octadecatrienoyl)-glycerol + (9Z)-octadecenoyl-CoA = 1-(9Z,12Z,15Z-octadecatrienoyl)-3-(9Z-octadecenoyl)-glycerol + CoA</text>
        <dbReference type="Rhea" id="RHEA:77595"/>
        <dbReference type="ChEBI" id="CHEBI:57287"/>
        <dbReference type="ChEBI" id="CHEBI:57387"/>
        <dbReference type="ChEBI" id="CHEBI:75610"/>
        <dbReference type="ChEBI" id="CHEBI:197408"/>
    </reaction>
    <physiologicalReaction direction="left-to-right" evidence="1">
        <dbReference type="Rhea" id="RHEA:77596"/>
    </physiologicalReaction>
</comment>
<comment type="catalytic activity">
    <reaction evidence="1">
        <text>a 1-acyl-sn-glycerol + an acyl-CoA = a 1,3-diacyl-sn-glycerol + CoA</text>
        <dbReference type="Rhea" id="RHEA:77559"/>
        <dbReference type="ChEBI" id="CHEBI:57287"/>
        <dbReference type="ChEBI" id="CHEBI:58342"/>
        <dbReference type="ChEBI" id="CHEBI:64683"/>
        <dbReference type="ChEBI" id="CHEBI:77272"/>
    </reaction>
    <physiologicalReaction direction="left-to-right" evidence="1">
        <dbReference type="Rhea" id="RHEA:77560"/>
    </physiologicalReaction>
</comment>
<comment type="catalytic activity">
    <reaction evidence="1">
        <text>a 3-acyl-sn-glycerol + an acyl-CoA = a 1,3-diacyl-sn-glycerol + CoA</text>
        <dbReference type="Rhea" id="RHEA:77555"/>
        <dbReference type="ChEBI" id="CHEBI:57287"/>
        <dbReference type="ChEBI" id="CHEBI:58342"/>
        <dbReference type="ChEBI" id="CHEBI:64760"/>
        <dbReference type="ChEBI" id="CHEBI:77272"/>
    </reaction>
    <physiologicalReaction direction="left-to-right" evidence="1">
        <dbReference type="Rhea" id="RHEA:77556"/>
    </physiologicalReaction>
</comment>
<comment type="catalytic activity">
    <reaction evidence="1">
        <text>3-octadecanoyl-sn-glycerol + (9Z)-octadecenoyl-CoA = 1-(9Z-octadecenoyl)-3-octadecanoyl-sn-glycerol + CoA</text>
        <dbReference type="Rhea" id="RHEA:77551"/>
        <dbReference type="ChEBI" id="CHEBI:57287"/>
        <dbReference type="ChEBI" id="CHEBI:57387"/>
        <dbReference type="ChEBI" id="CHEBI:75553"/>
        <dbReference type="ChEBI" id="CHEBI:197404"/>
    </reaction>
    <physiologicalReaction direction="left-to-right" evidence="1">
        <dbReference type="Rhea" id="RHEA:77552"/>
    </physiologicalReaction>
</comment>
<comment type="pathway">
    <text evidence="1">Glycerolipid metabolism; triacylglycerol biosynthesis.</text>
</comment>
<comment type="subcellular location">
    <subcellularLocation>
        <location evidence="1">Endoplasmic reticulum membrane</location>
        <topology evidence="1">Multi-pass membrane protein</topology>
    </subcellularLocation>
</comment>
<comment type="similarity">
    <text evidence="3">Belongs to the diacylglycerol acyltransferase family.</text>
</comment>
<name>MOGT1_BOVIN</name>
<reference key="1">
    <citation type="journal article" date="2003" name="Cytogenet. Genome Res.">
        <title>Genomic organization of the DGAT2/MOGAT gene family in cattle (Bos taurus) and other mammals.</title>
        <authorList>
            <person name="Winter A."/>
            <person name="van Eckeveld M."/>
            <person name="Bininda-Emonds O.R.P."/>
            <person name="Habermann F.A."/>
            <person name="Fries R."/>
        </authorList>
    </citation>
    <scope>NUCLEOTIDE SEQUENCE [GENOMIC DNA]</scope>
</reference>
<feature type="chain" id="PRO_0000249057" description="2-acylglycerol O-acyltransferase 1">
    <location>
        <begin position="1"/>
        <end position="335"/>
    </location>
</feature>
<feature type="transmembrane region" description="Helical" evidence="2">
    <location>
        <begin position="24"/>
        <end position="44"/>
    </location>
</feature>
<feature type="transmembrane region" description="Helical" evidence="2">
    <location>
        <begin position="104"/>
        <end position="124"/>
    </location>
</feature>
<feature type="glycosylation site" description="N-linked (GlcNAc...) asparagine" evidence="2">
    <location>
        <position position="125"/>
    </location>
</feature>
<feature type="glycosylation site" description="N-linked (GlcNAc...) asparagine" evidence="2">
    <location>
        <position position="180"/>
    </location>
</feature>
<protein>
    <recommendedName>
        <fullName>2-acylglycerol O-acyltransferase 1</fullName>
        <ecNumber evidence="1">2.3.1.22</ecNumber>
    </recommendedName>
    <alternativeName>
        <fullName>Acyl CoA:monoacylglycerol acyltransferase 1</fullName>
        <shortName>MGAT1</shortName>
    </alternativeName>
    <alternativeName>
        <fullName>Monoacylglycerol O-acyltransferase 1</fullName>
    </alternativeName>
</protein>
<gene>
    <name type="primary">MOGAT1</name>
</gene>
<dbReference type="EC" id="2.3.1.22" evidence="1"/>
<dbReference type="EMBL" id="AJ534373">
    <property type="protein sequence ID" value="CAD58969.2"/>
    <property type="molecule type" value="Genomic_DNA"/>
</dbReference>
<dbReference type="EMBL" id="AJ534374">
    <property type="protein sequence ID" value="CAD58969.2"/>
    <property type="status" value="JOINED"/>
    <property type="molecule type" value="Genomic_DNA"/>
</dbReference>
<dbReference type="EMBL" id="AJ534376">
    <property type="protein sequence ID" value="CAD58969.2"/>
    <property type="status" value="JOINED"/>
    <property type="molecule type" value="Genomic_DNA"/>
</dbReference>
<dbReference type="EMBL" id="AJ534375">
    <property type="protein sequence ID" value="CAD58969.2"/>
    <property type="status" value="JOINED"/>
    <property type="molecule type" value="Genomic_DNA"/>
</dbReference>
<dbReference type="EMBL" id="AJ519785">
    <property type="protein sequence ID" value="CAD58590.2"/>
    <property type="molecule type" value="mRNA"/>
</dbReference>
<dbReference type="RefSeq" id="NP_001001153.1">
    <property type="nucleotide sequence ID" value="NM_001001153.2"/>
</dbReference>
<dbReference type="FunCoup" id="Q70VZ7">
    <property type="interactions" value="276"/>
</dbReference>
<dbReference type="STRING" id="9913.ENSBTAP00000011091"/>
<dbReference type="GlyCosmos" id="Q70VZ7">
    <property type="glycosylation" value="2 sites, No reported glycans"/>
</dbReference>
<dbReference type="GlyGen" id="Q70VZ7">
    <property type="glycosylation" value="2 sites"/>
</dbReference>
<dbReference type="PaxDb" id="9913-ENSBTAP00000011091"/>
<dbReference type="GeneID" id="407225"/>
<dbReference type="KEGG" id="bta:407225"/>
<dbReference type="CTD" id="116255"/>
<dbReference type="VEuPathDB" id="HostDB:ENSBTAG00000008431"/>
<dbReference type="eggNOG" id="KOG0831">
    <property type="taxonomic scope" value="Eukaryota"/>
</dbReference>
<dbReference type="HOGENOM" id="CLU_023995_0_2_1"/>
<dbReference type="InParanoid" id="Q70VZ7"/>
<dbReference type="OMA" id="WIKNWTL"/>
<dbReference type="OrthoDB" id="264532at2759"/>
<dbReference type="TreeFam" id="TF314707"/>
<dbReference type="Reactome" id="R-BTA-75109">
    <property type="pathway name" value="Triglyceride biosynthesis"/>
</dbReference>
<dbReference type="UniPathway" id="UPA00282"/>
<dbReference type="Proteomes" id="UP000009136">
    <property type="component" value="Chromosome 2"/>
</dbReference>
<dbReference type="Bgee" id="ENSBTAG00000008431">
    <property type="expression patterns" value="Expressed in conceptus and 50 other cell types or tissues"/>
</dbReference>
<dbReference type="GO" id="GO:0005789">
    <property type="term" value="C:endoplasmic reticulum membrane"/>
    <property type="evidence" value="ECO:0000318"/>
    <property type="project" value="GO_Central"/>
</dbReference>
<dbReference type="GO" id="GO:0003846">
    <property type="term" value="F:2-acylglycerol O-acyltransferase activity"/>
    <property type="evidence" value="ECO:0007669"/>
    <property type="project" value="UniProtKB-EC"/>
</dbReference>
<dbReference type="GO" id="GO:0004144">
    <property type="term" value="F:diacylglycerol O-acyltransferase activity"/>
    <property type="evidence" value="ECO:0000318"/>
    <property type="project" value="GO_Central"/>
</dbReference>
<dbReference type="GO" id="GO:0006651">
    <property type="term" value="P:diacylglycerol biosynthetic process"/>
    <property type="evidence" value="ECO:0000318"/>
    <property type="project" value="GO_Central"/>
</dbReference>
<dbReference type="GO" id="GO:0006071">
    <property type="term" value="P:glycerol metabolic process"/>
    <property type="evidence" value="ECO:0007669"/>
    <property type="project" value="UniProtKB-KW"/>
</dbReference>
<dbReference type="GO" id="GO:0019432">
    <property type="term" value="P:triglyceride biosynthetic process"/>
    <property type="evidence" value="ECO:0000318"/>
    <property type="project" value="GO_Central"/>
</dbReference>
<dbReference type="CDD" id="cd07987">
    <property type="entry name" value="LPLAT_MGAT-like"/>
    <property type="match status" value="1"/>
</dbReference>
<dbReference type="InterPro" id="IPR007130">
    <property type="entry name" value="DAGAT"/>
</dbReference>
<dbReference type="PANTHER" id="PTHR12317:SF26">
    <property type="entry name" value="2-ACYLGLYCEROL O-ACYLTRANSFERASE 1"/>
    <property type="match status" value="1"/>
</dbReference>
<dbReference type="PANTHER" id="PTHR12317">
    <property type="entry name" value="DIACYLGLYCEROL O-ACYLTRANSFERASE"/>
    <property type="match status" value="1"/>
</dbReference>
<dbReference type="Pfam" id="PF03982">
    <property type="entry name" value="DAGAT"/>
    <property type="match status" value="1"/>
</dbReference>